<evidence type="ECO:0000250" key="1">
    <source>
        <dbReference type="UniProtKB" id="Q6ZPR5"/>
    </source>
</evidence>
<evidence type="ECO:0000250" key="2">
    <source>
        <dbReference type="UniProtKB" id="Q9NXE4"/>
    </source>
</evidence>
<evidence type="ECO:0000255" key="3"/>
<sequence>MAASALQQPSYLLANLKADWTNKPLHQRCHELCKIIDDYPAKELHAIFPWLVECVFGSLDGILTGWNLRFLQARSAEYSIAMEFLDPSGPMMKLVYKLQAEEYKYEFPISYLPGPIKSSIHAGVLPDCPLFHNKIQFPMSGLLFLNPFEYYMFNFASSLIAPKNYPQGQHGSSSDSAYFVLVDTYLKYFLPTEGNVPPSPFSDTRGTVASPAPRSTNVPYVGYGGHSTSLLKRHITHQSSVNADPAAQEIWRSETLLQVFVEMWLHHYSLEMYQKLQSPQVKEPFMPSEEHVLVVRLLVKHLHTFSSSLKPESISSSPSAHSHSSPLEELKRVVVQRFVQQKLYVFLQHCFGHWPLDASFRAVLETWLSYIQPWRYTGDKNNTQTDGPNRTVPDKWASFVQENLLLYTKLFQGFLNRAMRTDLVNAKNALMVFRVAKVFAQPSLSEMIQKGEQLFLEPEHAILQRHNRVFLTPSHGGSFLSARQPMGTDNVFKVKSHVYSLEGQDCQYNLMFGPDQRKNVLKLIQIIAQARQTAKRISDHSTEMAANNSFLSWFGVGSPDHNSTFTGGEMDEMGGEGVKKTHEFLDKALDYLCQIFRLNAGQLSQLISNVASVDNNGASKQLPDCIPSENGLVLTDLGRLQIINGLRRFEIEYQGDPELQPIRSYENAFLVRLLFQISSFINERLGEHMEVLCSRQDFLGSVGRHYLSSSSAVVEQRRKSPVTRQMRDRPQRARLSLRALASYRTLLTLLLLYMLFALLSFGLFSSTGLILIISFLYELLSNFFHEKLKTH</sequence>
<organism>
    <name type="scientific">Danio rerio</name>
    <name type="common">Zebrafish</name>
    <name type="synonym">Brachydanio rerio</name>
    <dbReference type="NCBI Taxonomy" id="7955"/>
    <lineage>
        <taxon>Eukaryota</taxon>
        <taxon>Metazoa</taxon>
        <taxon>Chordata</taxon>
        <taxon>Craniata</taxon>
        <taxon>Vertebrata</taxon>
        <taxon>Euteleostomi</taxon>
        <taxon>Actinopterygii</taxon>
        <taxon>Neopterygii</taxon>
        <taxon>Teleostei</taxon>
        <taxon>Ostariophysi</taxon>
        <taxon>Cypriniformes</taxon>
        <taxon>Danionidae</taxon>
        <taxon>Danioninae</taxon>
        <taxon>Danio</taxon>
    </lineage>
</organism>
<reference key="1">
    <citation type="submission" date="2003-09" db="EMBL/GenBank/DDBJ databases">
        <authorList>
            <consortium name="NIH - Zebrafish Gene Collection (ZGC) project"/>
        </authorList>
    </citation>
    <scope>NUCLEOTIDE SEQUENCE [LARGE SCALE MRNA]</scope>
    <source>
        <strain>SJD</strain>
    </source>
</reference>
<comment type="function">
    <text evidence="2">Catalyzes the hydrolysis of membrane sphingomyelin to form phosphorylcholine and ceramide. It has a relevant role in the homeostasis of membrane sphingolipids, thereby influencing membrane integrity, and endoplasmic reticulum organization and function. May sensitize cells to DNA damage-induced apoptosis.</text>
</comment>
<comment type="catalytic activity">
    <reaction evidence="2">
        <text>a sphingomyelin + H2O = phosphocholine + an N-acylsphing-4-enine + H(+)</text>
        <dbReference type="Rhea" id="RHEA:19253"/>
        <dbReference type="ChEBI" id="CHEBI:15377"/>
        <dbReference type="ChEBI" id="CHEBI:15378"/>
        <dbReference type="ChEBI" id="CHEBI:17636"/>
        <dbReference type="ChEBI" id="CHEBI:52639"/>
        <dbReference type="ChEBI" id="CHEBI:295975"/>
        <dbReference type="EC" id="3.1.4.12"/>
    </reaction>
    <physiologicalReaction direction="left-to-right" evidence="2">
        <dbReference type="Rhea" id="RHEA:19254"/>
    </physiologicalReaction>
</comment>
<comment type="cofactor">
    <cofactor evidence="2">
        <name>Mg(2+)</name>
        <dbReference type="ChEBI" id="CHEBI:18420"/>
    </cofactor>
</comment>
<comment type="subcellular location">
    <subcellularLocation>
        <location evidence="2">Endoplasmic reticulum membrane</location>
        <topology evidence="3">Single-pass membrane protein</topology>
    </subcellularLocation>
    <subcellularLocation>
        <location evidence="2">Golgi apparatus membrane</location>
        <topology evidence="3">Single-pass membrane protein</topology>
    </subcellularLocation>
    <subcellularLocation>
        <location evidence="2">Nucleus envelope</location>
    </subcellularLocation>
    <subcellularLocation>
        <location evidence="1">Cell membrane</location>
        <location evidence="1">Sarcolemma</location>
    </subcellularLocation>
</comment>
<dbReference type="EC" id="3.1.4.12"/>
<dbReference type="EMBL" id="BC057525">
    <property type="protein sequence ID" value="AAH57525.1"/>
    <property type="molecule type" value="mRNA"/>
</dbReference>
<dbReference type="RefSeq" id="NP_998520.1">
    <property type="nucleotide sequence ID" value="NM_213355.1"/>
</dbReference>
<dbReference type="FunCoup" id="Q6PFJ7">
    <property type="interactions" value="2235"/>
</dbReference>
<dbReference type="STRING" id="7955.ENSDARP00000107263"/>
<dbReference type="PaxDb" id="7955-ENSDARP00000107263"/>
<dbReference type="GeneID" id="793294"/>
<dbReference type="KEGG" id="dre:793294"/>
<dbReference type="AGR" id="ZFIN:ZDB-GENE-040426-2672"/>
<dbReference type="CTD" id="55627"/>
<dbReference type="ZFIN" id="ZDB-GENE-040426-2672">
    <property type="gene designation" value="smpd4"/>
</dbReference>
<dbReference type="eggNOG" id="KOG4396">
    <property type="taxonomic scope" value="Eukaryota"/>
</dbReference>
<dbReference type="InParanoid" id="Q6PFJ7"/>
<dbReference type="OrthoDB" id="10251508at2759"/>
<dbReference type="PhylomeDB" id="Q6PFJ7"/>
<dbReference type="Reactome" id="R-DRE-9840310">
    <property type="pathway name" value="Glycosphingolipid catabolism"/>
</dbReference>
<dbReference type="PRO" id="PR:Q6PFJ7"/>
<dbReference type="Proteomes" id="UP000000437">
    <property type="component" value="Chromosome 21"/>
</dbReference>
<dbReference type="GO" id="GO:0005783">
    <property type="term" value="C:endoplasmic reticulum"/>
    <property type="evidence" value="ECO:0000250"/>
    <property type="project" value="UniProtKB"/>
</dbReference>
<dbReference type="GO" id="GO:0005789">
    <property type="term" value="C:endoplasmic reticulum membrane"/>
    <property type="evidence" value="ECO:0007669"/>
    <property type="project" value="UniProtKB-SubCell"/>
</dbReference>
<dbReference type="GO" id="GO:0000139">
    <property type="term" value="C:Golgi membrane"/>
    <property type="evidence" value="ECO:0007669"/>
    <property type="project" value="UniProtKB-SubCell"/>
</dbReference>
<dbReference type="GO" id="GO:0005635">
    <property type="term" value="C:nuclear envelope"/>
    <property type="evidence" value="ECO:0000250"/>
    <property type="project" value="UniProtKB"/>
</dbReference>
<dbReference type="GO" id="GO:0042383">
    <property type="term" value="C:sarcolemma"/>
    <property type="evidence" value="ECO:0000250"/>
    <property type="project" value="UniProtKB"/>
</dbReference>
<dbReference type="GO" id="GO:0046872">
    <property type="term" value="F:metal ion binding"/>
    <property type="evidence" value="ECO:0007669"/>
    <property type="project" value="UniProtKB-KW"/>
</dbReference>
<dbReference type="GO" id="GO:0004767">
    <property type="term" value="F:sphingomyelin phosphodiesterase activity"/>
    <property type="evidence" value="ECO:0000250"/>
    <property type="project" value="UniProtKB"/>
</dbReference>
<dbReference type="GO" id="GO:0050290">
    <property type="term" value="F:sphingomyelin phosphodiesterase D activity"/>
    <property type="evidence" value="ECO:0000318"/>
    <property type="project" value="GO_Central"/>
</dbReference>
<dbReference type="GO" id="GO:0071356">
    <property type="term" value="P:cellular response to tumor necrosis factor"/>
    <property type="evidence" value="ECO:0000250"/>
    <property type="project" value="UniProtKB"/>
</dbReference>
<dbReference type="GO" id="GO:0046513">
    <property type="term" value="P:ceramide biosynthetic process"/>
    <property type="evidence" value="ECO:0000250"/>
    <property type="project" value="UniProtKB"/>
</dbReference>
<dbReference type="GO" id="GO:0046475">
    <property type="term" value="P:glycerophospholipid catabolic process"/>
    <property type="evidence" value="ECO:0000318"/>
    <property type="project" value="GO_Central"/>
</dbReference>
<dbReference type="GO" id="GO:0006685">
    <property type="term" value="P:sphingomyelin catabolic process"/>
    <property type="evidence" value="ECO:0000250"/>
    <property type="project" value="UniProtKB"/>
</dbReference>
<dbReference type="InterPro" id="IPR024129">
    <property type="entry name" value="Sphingomy_SMPD4"/>
</dbReference>
<dbReference type="PANTHER" id="PTHR12988">
    <property type="entry name" value="SPHINGOMYELIN PHOSPHODIESTERASE 4"/>
    <property type="match status" value="1"/>
</dbReference>
<dbReference type="PANTHER" id="PTHR12988:SF6">
    <property type="entry name" value="SPHINGOMYELIN PHOSPHODIESTERASE 4"/>
    <property type="match status" value="1"/>
</dbReference>
<dbReference type="Pfam" id="PF14724">
    <property type="entry name" value="mit_SMPDase"/>
    <property type="match status" value="2"/>
</dbReference>
<proteinExistence type="evidence at transcript level"/>
<name>NSMA3_DANRE</name>
<gene>
    <name type="primary">smpd4</name>
    <name type="ORF">zgc:66367</name>
</gene>
<accession>Q6PFJ7</accession>
<keyword id="KW-1003">Cell membrane</keyword>
<keyword id="KW-0256">Endoplasmic reticulum</keyword>
<keyword id="KW-0333">Golgi apparatus</keyword>
<keyword id="KW-0378">Hydrolase</keyword>
<keyword id="KW-0443">Lipid metabolism</keyword>
<keyword id="KW-0460">Magnesium</keyword>
<keyword id="KW-0472">Membrane</keyword>
<keyword id="KW-0479">Metal-binding</keyword>
<keyword id="KW-0539">Nucleus</keyword>
<keyword id="KW-1185">Reference proteome</keyword>
<keyword id="KW-0812">Transmembrane</keyword>
<keyword id="KW-1133">Transmembrane helix</keyword>
<feature type="chain" id="PRO_0000273165" description="Sphingomyelin phosphodiesterase 4">
    <location>
        <begin position="1"/>
        <end position="791"/>
    </location>
</feature>
<feature type="transmembrane region" description="Helical" evidence="3">
    <location>
        <begin position="755"/>
        <end position="775"/>
    </location>
</feature>
<protein>
    <recommendedName>
        <fullName>Sphingomyelin phosphodiesterase 4</fullName>
        <ecNumber>3.1.4.12</ecNumber>
    </recommendedName>
    <alternativeName>
        <fullName>Neutral sphingomyelinase 3</fullName>
        <shortName>nSMase-3</shortName>
        <shortName>nSMase3</shortName>
    </alternativeName>
    <alternativeName>
        <fullName>Neutral sphingomyelinase III</fullName>
    </alternativeName>
</protein>